<reference key="1">
    <citation type="submission" date="2006-08" db="EMBL/GenBank/DDBJ databases">
        <authorList>
            <consortium name="NIH - Mammalian Gene Collection (MGC) project"/>
        </authorList>
    </citation>
    <scope>NUCLEOTIDE SEQUENCE [LARGE SCALE MRNA]</scope>
    <source>
        <strain>Hereford</strain>
        <tissue>Placenta</tissue>
    </source>
</reference>
<sequence>MAAASFITSLVTRLLRSAQSGRLHQRPFHLSAVRNEAVVISGRKLAEQIKQEVRQEVEEWVASGNKRPHLSVVLVGENPASQSYVLNKTRAAASVGINSETILKPASISEEELLNLINKLNNDDNVDGLLVQLPLPEHIDERKVCNAVSPDKDVDGFHVINVGRMCLDQCSMLPATPWGVWEIIKRTGIPTLGKNVVVAGRSKNVGMPIAMLLHTDGAHERPGGDATVTISHRYTPKEELKKHTALADIVISAAGIPNLITADMIKEGAAVIDVGINRIQDPITAKPKLVGDVDFEGVKKKAGYITPVPGGVGPMTVAMLMKNTIIAAKKVLRLEEQEVLKSKELGVASN</sequence>
<name>MTDC_BOVIN</name>
<dbReference type="EC" id="1.5.1.15" evidence="3"/>
<dbReference type="EC" id="3.5.4.9" evidence="3"/>
<dbReference type="EMBL" id="BC120249">
    <property type="protein sequence ID" value="AAI20250.1"/>
    <property type="molecule type" value="mRNA"/>
</dbReference>
<dbReference type="RefSeq" id="NP_001069223.1">
    <property type="nucleotide sequence ID" value="NM_001075755.2"/>
</dbReference>
<dbReference type="SMR" id="Q0P5C2"/>
<dbReference type="FunCoup" id="Q0P5C2">
    <property type="interactions" value="479"/>
</dbReference>
<dbReference type="STRING" id="9913.ENSBTAP00000006419"/>
<dbReference type="PaxDb" id="9913-ENSBTAP00000006419"/>
<dbReference type="GeneID" id="517539"/>
<dbReference type="KEGG" id="bta:517539"/>
<dbReference type="CTD" id="10797"/>
<dbReference type="eggNOG" id="KOG0089">
    <property type="taxonomic scope" value="Eukaryota"/>
</dbReference>
<dbReference type="HOGENOM" id="CLU_034045_0_1_1"/>
<dbReference type="InParanoid" id="Q0P5C2"/>
<dbReference type="OrthoDB" id="5126881at2759"/>
<dbReference type="TreeFam" id="TF323998"/>
<dbReference type="Proteomes" id="UP000009136">
    <property type="component" value="Unplaced"/>
</dbReference>
<dbReference type="GO" id="GO:0005739">
    <property type="term" value="C:mitochondrion"/>
    <property type="evidence" value="ECO:0000318"/>
    <property type="project" value="GO_Central"/>
</dbReference>
<dbReference type="GO" id="GO:0000287">
    <property type="term" value="F:magnesium ion binding"/>
    <property type="evidence" value="ECO:0000250"/>
    <property type="project" value="UniProtKB"/>
</dbReference>
<dbReference type="GO" id="GO:0004477">
    <property type="term" value="F:methenyltetrahydrofolate cyclohydrolase activity"/>
    <property type="evidence" value="ECO:0000318"/>
    <property type="project" value="GO_Central"/>
</dbReference>
<dbReference type="GO" id="GO:0004487">
    <property type="term" value="F:methylenetetrahydrofolate dehydrogenase (NAD+) activity"/>
    <property type="evidence" value="ECO:0000250"/>
    <property type="project" value="UniProtKB"/>
</dbReference>
<dbReference type="GO" id="GO:0004488">
    <property type="term" value="F:methylenetetrahydrofolate dehydrogenase (NADP+) activity"/>
    <property type="evidence" value="ECO:0000250"/>
    <property type="project" value="UniProtKB"/>
</dbReference>
<dbReference type="GO" id="GO:0042301">
    <property type="term" value="F:phosphate ion binding"/>
    <property type="evidence" value="ECO:0000250"/>
    <property type="project" value="UniProtKB"/>
</dbReference>
<dbReference type="GO" id="GO:0035999">
    <property type="term" value="P:tetrahydrofolate interconversion"/>
    <property type="evidence" value="ECO:0000318"/>
    <property type="project" value="GO_Central"/>
</dbReference>
<dbReference type="CDD" id="cd01080">
    <property type="entry name" value="NAD_bind_m-THF_DH_Cyclohyd"/>
    <property type="match status" value="1"/>
</dbReference>
<dbReference type="FunFam" id="3.40.50.10860:FF:000001">
    <property type="entry name" value="Bifunctional protein FolD"/>
    <property type="match status" value="1"/>
</dbReference>
<dbReference type="FunFam" id="3.40.50.720:FF:000070">
    <property type="entry name" value="probable bifunctional methylenetetrahydrofolate dehydrogenase/cyclohydrolase 2"/>
    <property type="match status" value="1"/>
</dbReference>
<dbReference type="Gene3D" id="3.40.50.10860">
    <property type="entry name" value="Leucine Dehydrogenase, chain A, domain 1"/>
    <property type="match status" value="1"/>
</dbReference>
<dbReference type="Gene3D" id="3.40.50.720">
    <property type="entry name" value="NAD(P)-binding Rossmann-like Domain"/>
    <property type="match status" value="1"/>
</dbReference>
<dbReference type="HAMAP" id="MF_01576">
    <property type="entry name" value="THF_DHG_CYH"/>
    <property type="match status" value="1"/>
</dbReference>
<dbReference type="InterPro" id="IPR046346">
    <property type="entry name" value="Aminoacid_DH-like_N_sf"/>
</dbReference>
<dbReference type="InterPro" id="IPR036291">
    <property type="entry name" value="NAD(P)-bd_dom_sf"/>
</dbReference>
<dbReference type="InterPro" id="IPR000672">
    <property type="entry name" value="THF_DH/CycHdrlase"/>
</dbReference>
<dbReference type="InterPro" id="IPR020630">
    <property type="entry name" value="THF_DH/CycHdrlase_cat_dom"/>
</dbReference>
<dbReference type="InterPro" id="IPR020867">
    <property type="entry name" value="THF_DH/CycHdrlase_CS"/>
</dbReference>
<dbReference type="InterPro" id="IPR020631">
    <property type="entry name" value="THF_DH/CycHdrlase_NAD-bd_dom"/>
</dbReference>
<dbReference type="PANTHER" id="PTHR48099:SF15">
    <property type="entry name" value="BIFUNCTIONAL METHYLENETETRAHYDROFOLATE DEHYDROGENASE_CYCLOHYDROLASE, MITOCHONDRIAL"/>
    <property type="match status" value="1"/>
</dbReference>
<dbReference type="PANTHER" id="PTHR48099">
    <property type="entry name" value="C-1-TETRAHYDROFOLATE SYNTHASE, CYTOPLASMIC-RELATED"/>
    <property type="match status" value="1"/>
</dbReference>
<dbReference type="Pfam" id="PF00763">
    <property type="entry name" value="THF_DHG_CYH"/>
    <property type="match status" value="1"/>
</dbReference>
<dbReference type="Pfam" id="PF02882">
    <property type="entry name" value="THF_DHG_CYH_C"/>
    <property type="match status" value="1"/>
</dbReference>
<dbReference type="PRINTS" id="PR00085">
    <property type="entry name" value="THFDHDRGNASE"/>
</dbReference>
<dbReference type="SUPFAM" id="SSF53223">
    <property type="entry name" value="Aminoacid dehydrogenase-like, N-terminal domain"/>
    <property type="match status" value="1"/>
</dbReference>
<dbReference type="SUPFAM" id="SSF51735">
    <property type="entry name" value="NAD(P)-binding Rossmann-fold domains"/>
    <property type="match status" value="1"/>
</dbReference>
<dbReference type="PROSITE" id="PS00766">
    <property type="entry name" value="THF_DHG_CYH_1"/>
    <property type="match status" value="1"/>
</dbReference>
<dbReference type="PROSITE" id="PS00767">
    <property type="entry name" value="THF_DHG_CYH_2"/>
    <property type="match status" value="1"/>
</dbReference>
<gene>
    <name type="primary">MTHFD2</name>
</gene>
<evidence type="ECO:0000250" key="1"/>
<evidence type="ECO:0000250" key="2">
    <source>
        <dbReference type="UniProtKB" id="P13995"/>
    </source>
</evidence>
<evidence type="ECO:0000250" key="3">
    <source>
        <dbReference type="UniProtKB" id="P18155"/>
    </source>
</evidence>
<evidence type="ECO:0000305" key="4"/>
<accession>Q0P5C2</accession>
<comment type="function">
    <text evidence="2">Although its dehydrogenase activity is NAD-specific, it can also utilize NADP at a reduced efficiency.</text>
</comment>
<comment type="catalytic activity">
    <reaction evidence="3">
        <text>(6R)-5,10-methylene-5,6,7,8-tetrahydrofolate + NAD(+) = (6R)-5,10-methenyltetrahydrofolate + NADH</text>
        <dbReference type="Rhea" id="RHEA:22892"/>
        <dbReference type="ChEBI" id="CHEBI:15636"/>
        <dbReference type="ChEBI" id="CHEBI:57455"/>
        <dbReference type="ChEBI" id="CHEBI:57540"/>
        <dbReference type="ChEBI" id="CHEBI:57945"/>
        <dbReference type="EC" id="1.5.1.15"/>
    </reaction>
</comment>
<comment type="catalytic activity">
    <reaction evidence="3">
        <text>(6R)-5,10-methenyltetrahydrofolate + H2O = (6R)-10-formyltetrahydrofolate + H(+)</text>
        <dbReference type="Rhea" id="RHEA:23700"/>
        <dbReference type="ChEBI" id="CHEBI:15377"/>
        <dbReference type="ChEBI" id="CHEBI:15378"/>
        <dbReference type="ChEBI" id="CHEBI:57455"/>
        <dbReference type="ChEBI" id="CHEBI:195366"/>
        <dbReference type="EC" id="3.5.4.9"/>
    </reaction>
</comment>
<comment type="cofactor">
    <cofactor evidence="3">
        <name>Mg(2+)</name>
        <dbReference type="ChEBI" id="CHEBI:18420"/>
    </cofactor>
</comment>
<comment type="subunit">
    <text evidence="2">Homodimer.</text>
</comment>
<comment type="subcellular location">
    <subcellularLocation>
        <location evidence="1">Mitochondrion</location>
    </subcellularLocation>
</comment>
<comment type="miscellaneous">
    <text evidence="1">This NAD-dependent bifunctional enzyme has very different kinetic properties than the larger NADP-dependent trifunctional enzyme and is unique in that it requires formation of an enzyme-magnesium complex to allow binding of NAD.</text>
</comment>
<comment type="similarity">
    <text evidence="4">Belongs to the tetrahydrofolate dehydrogenase/cyclohydrolase family.</text>
</comment>
<protein>
    <recommendedName>
        <fullName>Bifunctional methylenetetrahydrofolate dehydrogenase/cyclohydrolase, mitochondrial</fullName>
    </recommendedName>
    <domain>
        <recommendedName>
            <fullName>NAD-dependent methylenetetrahydrofolate dehydrogenase</fullName>
            <ecNumber evidence="3">1.5.1.15</ecNumber>
        </recommendedName>
    </domain>
    <domain>
        <recommendedName>
            <fullName>Methenyltetrahydrofolate cyclohydrolase</fullName>
            <ecNumber evidence="3">3.5.4.9</ecNumber>
        </recommendedName>
    </domain>
</protein>
<organism>
    <name type="scientific">Bos taurus</name>
    <name type="common">Bovine</name>
    <dbReference type="NCBI Taxonomy" id="9913"/>
    <lineage>
        <taxon>Eukaryota</taxon>
        <taxon>Metazoa</taxon>
        <taxon>Chordata</taxon>
        <taxon>Craniata</taxon>
        <taxon>Vertebrata</taxon>
        <taxon>Euteleostomi</taxon>
        <taxon>Mammalia</taxon>
        <taxon>Eutheria</taxon>
        <taxon>Laurasiatheria</taxon>
        <taxon>Artiodactyla</taxon>
        <taxon>Ruminantia</taxon>
        <taxon>Pecora</taxon>
        <taxon>Bovidae</taxon>
        <taxon>Bovinae</taxon>
        <taxon>Bos</taxon>
    </lineage>
</organism>
<keyword id="KW-0007">Acetylation</keyword>
<keyword id="KW-0378">Hydrolase</keyword>
<keyword id="KW-1017">Isopeptide bond</keyword>
<keyword id="KW-0460">Magnesium</keyword>
<keyword id="KW-0496">Mitochondrion</keyword>
<keyword id="KW-0511">Multifunctional enzyme</keyword>
<keyword id="KW-0520">NAD</keyword>
<keyword id="KW-0521">NADP</keyword>
<keyword id="KW-0554">One-carbon metabolism</keyword>
<keyword id="KW-0560">Oxidoreductase</keyword>
<keyword id="KW-1185">Reference proteome</keyword>
<keyword id="KW-0809">Transit peptide</keyword>
<keyword id="KW-0832">Ubl conjugation</keyword>
<proteinExistence type="evidence at transcript level"/>
<feature type="transit peptide" description="Mitochondrion" evidence="1">
    <location>
        <begin position="1"/>
        <end position="35"/>
    </location>
</feature>
<feature type="chain" id="PRO_0000305902" description="Bifunctional methylenetetrahydrofolate dehydrogenase/cyclohydrolase, mitochondrial">
    <location>
        <begin position="36"/>
        <end position="350"/>
    </location>
</feature>
<feature type="binding site" evidence="2">
    <location>
        <begin position="84"/>
        <end position="88"/>
    </location>
    <ligand>
        <name>substrate</name>
    </ligand>
</feature>
<feature type="binding site" evidence="2">
    <location>
        <begin position="131"/>
        <end position="133"/>
    </location>
    <ligand>
        <name>substrate</name>
    </ligand>
</feature>
<feature type="binding site" evidence="2">
    <location>
        <begin position="200"/>
        <end position="202"/>
    </location>
    <ligand>
        <name>NAD(+)</name>
        <dbReference type="ChEBI" id="CHEBI:57540"/>
    </ligand>
</feature>
<feature type="binding site" evidence="2">
    <location>
        <position position="233"/>
    </location>
    <ligand>
        <name>NAD(+)</name>
        <dbReference type="ChEBI" id="CHEBI:57540"/>
    </ligand>
</feature>
<feature type="binding site" evidence="2">
    <location>
        <begin position="309"/>
        <end position="313"/>
    </location>
    <ligand>
        <name>substrate</name>
    </ligand>
</feature>
<feature type="modified residue" description="N6-acetyllysine; alternate" evidence="2">
    <location>
        <position position="50"/>
    </location>
</feature>
<feature type="cross-link" description="Glycyl lysine isopeptide (Lys-Gly) (interchain with G-Cter in SUMO2); alternate" evidence="2">
    <location>
        <position position="50"/>
    </location>
</feature>